<feature type="chain" id="PRO_1000069359" description="ADP-L-glycero-D-manno-heptose-6-epimerase">
    <location>
        <begin position="1"/>
        <end position="310"/>
    </location>
</feature>
<feature type="active site" description="Proton acceptor" evidence="1">
    <location>
        <position position="140"/>
    </location>
</feature>
<feature type="active site" description="Proton acceptor" evidence="1">
    <location>
        <position position="178"/>
    </location>
</feature>
<feature type="binding site" evidence="1">
    <location>
        <begin position="10"/>
        <end position="11"/>
    </location>
    <ligand>
        <name>NADP(+)</name>
        <dbReference type="ChEBI" id="CHEBI:58349"/>
    </ligand>
</feature>
<feature type="binding site" evidence="1">
    <location>
        <begin position="31"/>
        <end position="32"/>
    </location>
    <ligand>
        <name>NADP(+)</name>
        <dbReference type="ChEBI" id="CHEBI:58349"/>
    </ligand>
</feature>
<feature type="binding site" evidence="1">
    <location>
        <position position="38"/>
    </location>
    <ligand>
        <name>NADP(+)</name>
        <dbReference type="ChEBI" id="CHEBI:58349"/>
    </ligand>
</feature>
<feature type="binding site" evidence="1">
    <location>
        <position position="53"/>
    </location>
    <ligand>
        <name>NADP(+)</name>
        <dbReference type="ChEBI" id="CHEBI:58349"/>
    </ligand>
</feature>
<feature type="binding site" evidence="1">
    <location>
        <begin position="75"/>
        <end position="79"/>
    </location>
    <ligand>
        <name>NADP(+)</name>
        <dbReference type="ChEBI" id="CHEBI:58349"/>
    </ligand>
</feature>
<feature type="binding site" evidence="1">
    <location>
        <position position="92"/>
    </location>
    <ligand>
        <name>NADP(+)</name>
        <dbReference type="ChEBI" id="CHEBI:58349"/>
    </ligand>
</feature>
<feature type="binding site" evidence="1">
    <location>
        <position position="144"/>
    </location>
    <ligand>
        <name>NADP(+)</name>
        <dbReference type="ChEBI" id="CHEBI:58349"/>
    </ligand>
</feature>
<feature type="binding site" evidence="1">
    <location>
        <position position="169"/>
    </location>
    <ligand>
        <name>substrate</name>
    </ligand>
</feature>
<feature type="binding site" evidence="1">
    <location>
        <position position="170"/>
    </location>
    <ligand>
        <name>NADP(+)</name>
        <dbReference type="ChEBI" id="CHEBI:58349"/>
    </ligand>
</feature>
<feature type="binding site" evidence="1">
    <location>
        <position position="178"/>
    </location>
    <ligand>
        <name>NADP(+)</name>
        <dbReference type="ChEBI" id="CHEBI:58349"/>
    </ligand>
</feature>
<feature type="binding site" evidence="1">
    <location>
        <position position="180"/>
    </location>
    <ligand>
        <name>substrate</name>
    </ligand>
</feature>
<feature type="binding site" evidence="1">
    <location>
        <position position="187"/>
    </location>
    <ligand>
        <name>substrate</name>
    </ligand>
</feature>
<feature type="binding site" evidence="1">
    <location>
        <begin position="201"/>
        <end position="204"/>
    </location>
    <ligand>
        <name>substrate</name>
    </ligand>
</feature>
<feature type="binding site" evidence="1">
    <location>
        <position position="209"/>
    </location>
    <ligand>
        <name>substrate</name>
    </ligand>
</feature>
<feature type="binding site" evidence="1">
    <location>
        <position position="272"/>
    </location>
    <ligand>
        <name>substrate</name>
    </ligand>
</feature>
<proteinExistence type="inferred from homology"/>
<dbReference type="EC" id="5.1.3.20" evidence="1"/>
<dbReference type="EMBL" id="CP000647">
    <property type="protein sequence ID" value="ABR79348.1"/>
    <property type="molecule type" value="Genomic_DNA"/>
</dbReference>
<dbReference type="SMR" id="A6TFL4"/>
<dbReference type="STRING" id="272620.KPN_03963"/>
<dbReference type="jPOST" id="A6TFL4"/>
<dbReference type="PaxDb" id="272620-KPN_03963"/>
<dbReference type="EnsemblBacteria" id="ABR79348">
    <property type="protein sequence ID" value="ABR79348"/>
    <property type="gene ID" value="KPN_03963"/>
</dbReference>
<dbReference type="KEGG" id="kpn:KPN_03963"/>
<dbReference type="HOGENOM" id="CLU_007383_1_3_6"/>
<dbReference type="UniPathway" id="UPA00356">
    <property type="reaction ID" value="UER00440"/>
</dbReference>
<dbReference type="Proteomes" id="UP000000265">
    <property type="component" value="Chromosome"/>
</dbReference>
<dbReference type="GO" id="GO:0008712">
    <property type="term" value="F:ADP-glyceromanno-heptose 6-epimerase activity"/>
    <property type="evidence" value="ECO:0007669"/>
    <property type="project" value="UniProtKB-UniRule"/>
</dbReference>
<dbReference type="GO" id="GO:0050661">
    <property type="term" value="F:NADP binding"/>
    <property type="evidence" value="ECO:0007669"/>
    <property type="project" value="InterPro"/>
</dbReference>
<dbReference type="GO" id="GO:0097171">
    <property type="term" value="P:ADP-L-glycero-beta-D-manno-heptose biosynthetic process"/>
    <property type="evidence" value="ECO:0007669"/>
    <property type="project" value="UniProtKB-UniPathway"/>
</dbReference>
<dbReference type="GO" id="GO:0005975">
    <property type="term" value="P:carbohydrate metabolic process"/>
    <property type="evidence" value="ECO:0007669"/>
    <property type="project" value="UniProtKB-UniRule"/>
</dbReference>
<dbReference type="CDD" id="cd05248">
    <property type="entry name" value="ADP_GME_SDR_e"/>
    <property type="match status" value="1"/>
</dbReference>
<dbReference type="Gene3D" id="3.40.50.720">
    <property type="entry name" value="NAD(P)-binding Rossmann-like Domain"/>
    <property type="match status" value="1"/>
</dbReference>
<dbReference type="Gene3D" id="3.90.25.10">
    <property type="entry name" value="UDP-galactose 4-epimerase, domain 1"/>
    <property type="match status" value="1"/>
</dbReference>
<dbReference type="HAMAP" id="MF_01601">
    <property type="entry name" value="Heptose_epimerase"/>
    <property type="match status" value="1"/>
</dbReference>
<dbReference type="InterPro" id="IPR001509">
    <property type="entry name" value="Epimerase_deHydtase"/>
</dbReference>
<dbReference type="InterPro" id="IPR011912">
    <property type="entry name" value="Heptose_epim"/>
</dbReference>
<dbReference type="InterPro" id="IPR036291">
    <property type="entry name" value="NAD(P)-bd_dom_sf"/>
</dbReference>
<dbReference type="NCBIfam" id="TIGR02197">
    <property type="entry name" value="heptose_epim"/>
    <property type="match status" value="1"/>
</dbReference>
<dbReference type="NCBIfam" id="NF008360">
    <property type="entry name" value="PRK11150.1"/>
    <property type="match status" value="1"/>
</dbReference>
<dbReference type="PANTHER" id="PTHR43103:SF3">
    <property type="entry name" value="ADP-L-GLYCERO-D-MANNO-HEPTOSE-6-EPIMERASE"/>
    <property type="match status" value="1"/>
</dbReference>
<dbReference type="PANTHER" id="PTHR43103">
    <property type="entry name" value="NUCLEOSIDE-DIPHOSPHATE-SUGAR EPIMERASE"/>
    <property type="match status" value="1"/>
</dbReference>
<dbReference type="Pfam" id="PF01370">
    <property type="entry name" value="Epimerase"/>
    <property type="match status" value="1"/>
</dbReference>
<dbReference type="SUPFAM" id="SSF51735">
    <property type="entry name" value="NAD(P)-binding Rossmann-fold domains"/>
    <property type="match status" value="1"/>
</dbReference>
<organism>
    <name type="scientific">Klebsiella pneumoniae subsp. pneumoniae (strain ATCC 700721 / MGH 78578)</name>
    <dbReference type="NCBI Taxonomy" id="272620"/>
    <lineage>
        <taxon>Bacteria</taxon>
        <taxon>Pseudomonadati</taxon>
        <taxon>Pseudomonadota</taxon>
        <taxon>Gammaproteobacteria</taxon>
        <taxon>Enterobacterales</taxon>
        <taxon>Enterobacteriaceae</taxon>
        <taxon>Klebsiella/Raoultella group</taxon>
        <taxon>Klebsiella</taxon>
        <taxon>Klebsiella pneumoniae complex</taxon>
    </lineage>
</organism>
<reference key="1">
    <citation type="submission" date="2006-09" db="EMBL/GenBank/DDBJ databases">
        <authorList>
            <consortium name="The Klebsiella pneumonia Genome Sequencing Project"/>
            <person name="McClelland M."/>
            <person name="Sanderson E.K."/>
            <person name="Spieth J."/>
            <person name="Clifton W.S."/>
            <person name="Latreille P."/>
            <person name="Sabo A."/>
            <person name="Pepin K."/>
            <person name="Bhonagiri V."/>
            <person name="Porwollik S."/>
            <person name="Ali J."/>
            <person name="Wilson R.K."/>
        </authorList>
    </citation>
    <scope>NUCLEOTIDE SEQUENCE [LARGE SCALE GENOMIC DNA]</scope>
    <source>
        <strain>ATCC 700721 / MGH 78578</strain>
    </source>
</reference>
<sequence>MIIVTGGAGFIGSNIVKALNDKGITDILVVDNLKDGTKFVNLVDLNIADYMDKEDFLIQIMAGEEFGEIEAIFHEGACSSTTEWDGKYMMDNNYQYSKELLHYCLEREIPFLYASSAATYGGRTSDFIESREYEQPLNVYGYSKFLFDEYVRQILPEANSQIVGFRYFNVYGPREGHKGSMASVAFHLNTQLNNGESPKLFEGSDGFKRDFVYVGDVADVNLWFWENGVSGIFNLGTGRAESFQAVADATLAYHKKGSIEYIPFPDKLKGRYQAFTQADLTNLRKAGYDKPFKTVAEGVTEYMAWLNRDA</sequence>
<comment type="function">
    <text evidence="1">Catalyzes the interconversion between ADP-D-glycero-beta-D-manno-heptose and ADP-L-glycero-beta-D-manno-heptose via an epimerization at carbon 6 of the heptose.</text>
</comment>
<comment type="catalytic activity">
    <reaction evidence="1">
        <text>ADP-D-glycero-beta-D-manno-heptose = ADP-L-glycero-beta-D-manno-heptose</text>
        <dbReference type="Rhea" id="RHEA:17577"/>
        <dbReference type="ChEBI" id="CHEBI:59967"/>
        <dbReference type="ChEBI" id="CHEBI:61506"/>
        <dbReference type="EC" id="5.1.3.20"/>
    </reaction>
</comment>
<comment type="cofactor">
    <cofactor evidence="1">
        <name>NADP(+)</name>
        <dbReference type="ChEBI" id="CHEBI:58349"/>
    </cofactor>
    <text evidence="1">Binds 1 NADP(+) per subunit.</text>
</comment>
<comment type="pathway">
    <text evidence="1">Nucleotide-sugar biosynthesis; ADP-L-glycero-beta-D-manno-heptose biosynthesis; ADP-L-glycero-beta-D-manno-heptose from D-glycero-beta-D-manno-heptose 7-phosphate: step 4/4.</text>
</comment>
<comment type="subunit">
    <text evidence="1">Homopentamer.</text>
</comment>
<comment type="domain">
    <text evidence="1">Contains a large N-terminal NADP-binding domain, and a smaller C-terminal substrate-binding domain.</text>
</comment>
<comment type="similarity">
    <text evidence="1">Belongs to the NAD(P)-dependent epimerase/dehydratase family. HldD subfamily.</text>
</comment>
<accession>A6TFL4</accession>
<keyword id="KW-0119">Carbohydrate metabolism</keyword>
<keyword id="KW-0413">Isomerase</keyword>
<keyword id="KW-0521">NADP</keyword>
<name>HLDD_KLEP7</name>
<gene>
    <name evidence="1" type="primary">hldD</name>
    <name type="ordered locus">KPN78578_39240</name>
    <name type="ORF">KPN_03963</name>
</gene>
<protein>
    <recommendedName>
        <fullName evidence="1">ADP-L-glycero-D-manno-heptose-6-epimerase</fullName>
        <ecNumber evidence="1">5.1.3.20</ecNumber>
    </recommendedName>
    <alternativeName>
        <fullName evidence="1">ADP-L-glycero-beta-D-manno-heptose-6-epimerase</fullName>
        <shortName evidence="1">ADP-glyceromanno-heptose 6-epimerase</shortName>
        <shortName evidence="1">ADP-hep 6-epimerase</shortName>
        <shortName evidence="1">AGME</shortName>
    </alternativeName>
</protein>
<evidence type="ECO:0000255" key="1">
    <source>
        <dbReference type="HAMAP-Rule" id="MF_01601"/>
    </source>
</evidence>